<feature type="chain" id="PRO_0000430631" description="Phosphoglycerate mutase-like protein">
    <location>
        <begin position="1"/>
        <end position="271"/>
    </location>
</feature>
<feature type="region of interest" description="Disordered" evidence="3">
    <location>
        <begin position="252"/>
        <end position="271"/>
    </location>
</feature>
<feature type="active site" description="Tele-phosphohistidine intermediate" evidence="1">
    <location>
        <position position="22"/>
    </location>
</feature>
<feature type="active site" description="Proton donor/acceptor" evidence="1">
    <location>
        <position position="134"/>
    </location>
</feature>
<feature type="site" description="Transition state stabilizer" evidence="1">
    <location>
        <position position="205"/>
    </location>
</feature>
<accession>Q8GY96</accession>
<dbReference type="EMBL" id="CP002685">
    <property type="protein sequence ID" value="AEC06607.1"/>
    <property type="molecule type" value="Genomic_DNA"/>
</dbReference>
<dbReference type="EMBL" id="CP002685">
    <property type="protein sequence ID" value="AEC06608.1"/>
    <property type="molecule type" value="Genomic_DNA"/>
</dbReference>
<dbReference type="EMBL" id="AK117779">
    <property type="protein sequence ID" value="BAC42426.1"/>
    <property type="molecule type" value="mRNA"/>
</dbReference>
<dbReference type="EMBL" id="BT006234">
    <property type="protein sequence ID" value="AAP12883.1"/>
    <property type="molecule type" value="mRNA"/>
</dbReference>
<dbReference type="PIR" id="C84550">
    <property type="entry name" value="C84550"/>
</dbReference>
<dbReference type="RefSeq" id="NP_001077906.1">
    <property type="nucleotide sequence ID" value="NM_001084437.2"/>
</dbReference>
<dbReference type="RefSeq" id="NP_179320.1">
    <property type="nucleotide sequence ID" value="NM_127283.6"/>
</dbReference>
<dbReference type="SMR" id="Q8GY96"/>
<dbReference type="FunCoup" id="Q8GY96">
    <property type="interactions" value="171"/>
</dbReference>
<dbReference type="STRING" id="3702.Q8GY96"/>
<dbReference type="iPTMnet" id="Q8GY96"/>
<dbReference type="PaxDb" id="3702-AT2G17280.2"/>
<dbReference type="ProteomicsDB" id="234902"/>
<dbReference type="EnsemblPlants" id="AT2G17280.1">
    <property type="protein sequence ID" value="AT2G17280.1"/>
    <property type="gene ID" value="AT2G17280"/>
</dbReference>
<dbReference type="EnsemblPlants" id="AT2G17280.2">
    <property type="protein sequence ID" value="AT2G17280.2"/>
    <property type="gene ID" value="AT2G17280"/>
</dbReference>
<dbReference type="GeneID" id="816234"/>
<dbReference type="Gramene" id="AT2G17280.1">
    <property type="protein sequence ID" value="AT2G17280.1"/>
    <property type="gene ID" value="AT2G17280"/>
</dbReference>
<dbReference type="Gramene" id="AT2G17280.2">
    <property type="protein sequence ID" value="AT2G17280.2"/>
    <property type="gene ID" value="AT2G17280"/>
</dbReference>
<dbReference type="KEGG" id="ath:AT2G17280"/>
<dbReference type="Araport" id="AT2G17280"/>
<dbReference type="TAIR" id="AT2G17280"/>
<dbReference type="eggNOG" id="KOG4754">
    <property type="taxonomic scope" value="Eukaryota"/>
</dbReference>
<dbReference type="HOGENOM" id="CLU_039184_4_0_1"/>
<dbReference type="InParanoid" id="Q8GY96"/>
<dbReference type="OMA" id="EFIKWIW"/>
<dbReference type="PhylomeDB" id="Q8GY96"/>
<dbReference type="PRO" id="PR:Q8GY96"/>
<dbReference type="Proteomes" id="UP000006548">
    <property type="component" value="Chromosome 2"/>
</dbReference>
<dbReference type="ExpressionAtlas" id="Q8GY96">
    <property type="expression patterns" value="baseline and differential"/>
</dbReference>
<dbReference type="CDD" id="cd07067">
    <property type="entry name" value="HP_PGM_like"/>
    <property type="match status" value="1"/>
</dbReference>
<dbReference type="FunFam" id="3.40.50.1240:FF:000066">
    <property type="entry name" value="Phosphoglycerate mutase-like protein 1"/>
    <property type="match status" value="1"/>
</dbReference>
<dbReference type="Gene3D" id="3.40.50.1240">
    <property type="entry name" value="Phosphoglycerate mutase-like"/>
    <property type="match status" value="1"/>
</dbReference>
<dbReference type="InterPro" id="IPR013078">
    <property type="entry name" value="His_Pase_superF_clade-1"/>
</dbReference>
<dbReference type="InterPro" id="IPR029033">
    <property type="entry name" value="His_PPase_superfam"/>
</dbReference>
<dbReference type="InterPro" id="IPR050275">
    <property type="entry name" value="PGM_Phosphatase"/>
</dbReference>
<dbReference type="PANTHER" id="PTHR48100">
    <property type="entry name" value="BROAD-SPECIFICITY PHOSPHATASE YOR283W-RELATED"/>
    <property type="match status" value="1"/>
</dbReference>
<dbReference type="PANTHER" id="PTHR48100:SF63">
    <property type="entry name" value="PHOSPHOGLYCERATE MUTASE-LIKE PROTEIN"/>
    <property type="match status" value="1"/>
</dbReference>
<dbReference type="Pfam" id="PF00300">
    <property type="entry name" value="His_Phos_1"/>
    <property type="match status" value="1"/>
</dbReference>
<dbReference type="SMART" id="SM00855">
    <property type="entry name" value="PGAM"/>
    <property type="match status" value="1"/>
</dbReference>
<dbReference type="SUPFAM" id="SSF53254">
    <property type="entry name" value="Phosphoglycerate mutase-like"/>
    <property type="match status" value="1"/>
</dbReference>
<organism evidence="8">
    <name type="scientific">Arabidopsis thaliana</name>
    <name type="common">Mouse-ear cress</name>
    <dbReference type="NCBI Taxonomy" id="3702"/>
    <lineage>
        <taxon>Eukaryota</taxon>
        <taxon>Viridiplantae</taxon>
        <taxon>Streptophyta</taxon>
        <taxon>Embryophyta</taxon>
        <taxon>Tracheophyta</taxon>
        <taxon>Spermatophyta</taxon>
        <taxon>Magnoliopsida</taxon>
        <taxon>eudicotyledons</taxon>
        <taxon>Gunneridae</taxon>
        <taxon>Pentapetalae</taxon>
        <taxon>rosids</taxon>
        <taxon>malvids</taxon>
        <taxon>Brassicales</taxon>
        <taxon>Brassicaceae</taxon>
        <taxon>Camelineae</taxon>
        <taxon>Arabidopsis</taxon>
    </lineage>
</organism>
<reference key="1">
    <citation type="journal article" date="1999" name="Nature">
        <title>Sequence and analysis of chromosome 2 of the plant Arabidopsis thaliana.</title>
        <authorList>
            <person name="Lin X."/>
            <person name="Kaul S."/>
            <person name="Rounsley S.D."/>
            <person name="Shea T.P."/>
            <person name="Benito M.-I."/>
            <person name="Town C.D."/>
            <person name="Fujii C.Y."/>
            <person name="Mason T.M."/>
            <person name="Bowman C.L."/>
            <person name="Barnstead M.E."/>
            <person name="Feldblyum T.V."/>
            <person name="Buell C.R."/>
            <person name="Ketchum K.A."/>
            <person name="Lee J.J."/>
            <person name="Ronning C.M."/>
            <person name="Koo H.L."/>
            <person name="Moffat K.S."/>
            <person name="Cronin L.A."/>
            <person name="Shen M."/>
            <person name="Pai G."/>
            <person name="Van Aken S."/>
            <person name="Umayam L."/>
            <person name="Tallon L.J."/>
            <person name="Gill J.E."/>
            <person name="Adams M.D."/>
            <person name="Carrera A.J."/>
            <person name="Creasy T.H."/>
            <person name="Goodman H.M."/>
            <person name="Somerville C.R."/>
            <person name="Copenhaver G.P."/>
            <person name="Preuss D."/>
            <person name="Nierman W.C."/>
            <person name="White O."/>
            <person name="Eisen J.A."/>
            <person name="Salzberg S.L."/>
            <person name="Fraser C.M."/>
            <person name="Venter J.C."/>
        </authorList>
    </citation>
    <scope>NUCLEOTIDE SEQUENCE [LARGE SCALE GENOMIC DNA]</scope>
    <source>
        <strain>cv. Columbia</strain>
    </source>
</reference>
<reference key="2">
    <citation type="journal article" date="2017" name="Plant J.">
        <title>Araport11: a complete reannotation of the Arabidopsis thaliana reference genome.</title>
        <authorList>
            <person name="Cheng C.Y."/>
            <person name="Krishnakumar V."/>
            <person name="Chan A.P."/>
            <person name="Thibaud-Nissen F."/>
            <person name="Schobel S."/>
            <person name="Town C.D."/>
        </authorList>
    </citation>
    <scope>GENOME REANNOTATION</scope>
    <source>
        <strain>cv. Columbia</strain>
    </source>
</reference>
<reference key="3">
    <citation type="journal article" date="2002" name="Science">
        <title>Functional annotation of a full-length Arabidopsis cDNA collection.</title>
        <authorList>
            <person name="Seki M."/>
            <person name="Narusaka M."/>
            <person name="Kamiya A."/>
            <person name="Ishida J."/>
            <person name="Satou M."/>
            <person name="Sakurai T."/>
            <person name="Nakajima M."/>
            <person name="Enju A."/>
            <person name="Akiyama K."/>
            <person name="Oono Y."/>
            <person name="Muramatsu M."/>
            <person name="Hayashizaki Y."/>
            <person name="Kawai J."/>
            <person name="Carninci P."/>
            <person name="Itoh M."/>
            <person name="Ishii Y."/>
            <person name="Arakawa T."/>
            <person name="Shibata K."/>
            <person name="Shinagawa A."/>
            <person name="Shinozaki K."/>
        </authorList>
    </citation>
    <scope>NUCLEOTIDE SEQUENCE [LARGE SCALE MRNA]</scope>
    <source>
        <strain>cv. Columbia</strain>
    </source>
</reference>
<reference key="4">
    <citation type="journal article" date="2003" name="Science">
        <title>Empirical analysis of transcriptional activity in the Arabidopsis genome.</title>
        <authorList>
            <person name="Yamada K."/>
            <person name="Lim J."/>
            <person name="Dale J.M."/>
            <person name="Chen H."/>
            <person name="Shinn P."/>
            <person name="Palm C.J."/>
            <person name="Southwick A.M."/>
            <person name="Wu H.C."/>
            <person name="Kim C.J."/>
            <person name="Nguyen M."/>
            <person name="Pham P.K."/>
            <person name="Cheuk R.F."/>
            <person name="Karlin-Newmann G."/>
            <person name="Liu S.X."/>
            <person name="Lam B."/>
            <person name="Sakano H."/>
            <person name="Wu T."/>
            <person name="Yu G."/>
            <person name="Miranda M."/>
            <person name="Quach H.L."/>
            <person name="Tripp M."/>
            <person name="Chang C.H."/>
            <person name="Lee J.M."/>
            <person name="Toriumi M.J."/>
            <person name="Chan M.M."/>
            <person name="Tang C.C."/>
            <person name="Onodera C.S."/>
            <person name="Deng J.M."/>
            <person name="Akiyama K."/>
            <person name="Ansari Y."/>
            <person name="Arakawa T."/>
            <person name="Banh J."/>
            <person name="Banno F."/>
            <person name="Bowser L."/>
            <person name="Brooks S.Y."/>
            <person name="Carninci P."/>
            <person name="Chao Q."/>
            <person name="Choy N."/>
            <person name="Enju A."/>
            <person name="Goldsmith A.D."/>
            <person name="Gurjal M."/>
            <person name="Hansen N.F."/>
            <person name="Hayashizaki Y."/>
            <person name="Johnson-Hopson C."/>
            <person name="Hsuan V.W."/>
            <person name="Iida K."/>
            <person name="Karnes M."/>
            <person name="Khan S."/>
            <person name="Koesema E."/>
            <person name="Ishida J."/>
            <person name="Jiang P.X."/>
            <person name="Jones T."/>
            <person name="Kawai J."/>
            <person name="Kamiya A."/>
            <person name="Meyers C."/>
            <person name="Nakajima M."/>
            <person name="Narusaka M."/>
            <person name="Seki M."/>
            <person name="Sakurai T."/>
            <person name="Satou M."/>
            <person name="Tamse R."/>
            <person name="Vaysberg M."/>
            <person name="Wallender E.K."/>
            <person name="Wong C."/>
            <person name="Yamamura Y."/>
            <person name="Yuan S."/>
            <person name="Shinozaki K."/>
            <person name="Davis R.W."/>
            <person name="Theologis A."/>
            <person name="Ecker J.R."/>
        </authorList>
    </citation>
    <scope>NUCLEOTIDE SEQUENCE [LARGE SCALE MRNA]</scope>
    <source>
        <strain>cv. Columbia</strain>
    </source>
</reference>
<reference key="5">
    <citation type="journal article" date="2003" name="Plant Mol. Biol.">
        <title>Expression of an Arabidopsis phosphoglycerate mutase homologue is localized to apical meristems, regulated by hormones, and induced by sedentary plant-parasitic nematodes.</title>
        <authorList>
            <person name="Mazarei M."/>
            <person name="Lennon K.A."/>
            <person name="Puthoff D.P."/>
            <person name="Rodermel S.R."/>
            <person name="Baum T.J."/>
        </authorList>
    </citation>
    <scope>TISSUE SPECIFICITY</scope>
    <scope>INDUCTION</scope>
</reference>
<name>PGM_ARATH</name>
<sequence>MDNEGIGLYPLHRCKTIHLVRHAQGIHNVAGEKDHSAYSSEDYFDAHLTPLGWQQVDNLRNHVRAAQLLNKVELVIVSPMLRTIQTAVGAFGGEEDTNGADATPLMVANAGSSDRPAISSLNSPPFLAVELCRETMGDHPCDRRRSVTEYKALFPAIDFSIIETDNDVLWKPSPRESLEEVAARGVEFIKWIWTRKEKEIAIVSHSGFLHGLLSSFGKDCCDDLKKELSIHLSNCELRSMVIVDRGNLGTDSAETTNYPGKVPEGLDNPSG</sequence>
<evidence type="ECO:0000250" key="1">
    <source>
        <dbReference type="UniProtKB" id="P62707"/>
    </source>
</evidence>
<evidence type="ECO:0000250" key="2">
    <source>
        <dbReference type="UniProtKB" id="Q9MAA2"/>
    </source>
</evidence>
<evidence type="ECO:0000256" key="3">
    <source>
        <dbReference type="SAM" id="MobiDB-lite"/>
    </source>
</evidence>
<evidence type="ECO:0000269" key="4">
    <source>
    </source>
</evidence>
<evidence type="ECO:0000303" key="5">
    <source>
    </source>
</evidence>
<evidence type="ECO:0000305" key="6"/>
<evidence type="ECO:0000312" key="7">
    <source>
        <dbReference type="Araport" id="AT2G17280"/>
    </source>
</evidence>
<evidence type="ECO:0000312" key="8">
    <source>
        <dbReference type="EMBL" id="BAC42426.1"/>
    </source>
</evidence>
<keyword id="KW-1185">Reference proteome</keyword>
<comment type="function">
    <text evidence="2">May play a role in carbohydrates metabolism.</text>
</comment>
<comment type="tissue specificity">
    <text evidence="4">Expressed in the shoot apical meristem and meristematic zone of the root tips.</text>
</comment>
<comment type="induction">
    <text evidence="4">By auxin, sucrose, oryzalin and the nematodes Heterodera schachtii and Meloidogyne incognita in roots. Down-regulated by abscisic acid (ABA) and hydroxyurea.</text>
</comment>
<comment type="similarity">
    <text evidence="6">Belongs to the phosphoglycerate mutase family.</text>
</comment>
<proteinExistence type="evidence at transcript level"/>
<protein>
    <recommendedName>
        <fullName evidence="5">Phosphoglycerate mutase-like protein</fullName>
        <shortName evidence="5">AtPGM</shortName>
    </recommendedName>
</protein>
<gene>
    <name evidence="5" type="primary">PGM</name>
    <name evidence="7" type="ordered locus">At2g17280</name>
    <name type="ORF">F5J6</name>
</gene>